<name>CDHR2_MOUSE</name>
<feature type="signal peptide" evidence="2">
    <location>
        <begin position="1"/>
        <end position="20"/>
    </location>
</feature>
<feature type="chain" id="PRO_5003243107" description="Cadherin-related family member 2" evidence="2">
    <location>
        <begin position="21"/>
        <end position="1308"/>
    </location>
</feature>
<feature type="topological domain" description="Extracellular" evidence="5">
    <location>
        <begin position="21"/>
        <end position="1152"/>
    </location>
</feature>
<feature type="transmembrane region" description="Helical" evidence="2">
    <location>
        <begin position="1153"/>
        <end position="1173"/>
    </location>
</feature>
<feature type="topological domain" description="Cytoplasmic" evidence="5">
    <location>
        <begin position="1174"/>
        <end position="1308"/>
    </location>
</feature>
<feature type="domain" description="Cadherin 1" evidence="3">
    <location>
        <begin position="33"/>
        <end position="124"/>
    </location>
</feature>
<feature type="domain" description="Cadherin 2" evidence="3">
    <location>
        <begin position="125"/>
        <end position="241"/>
    </location>
</feature>
<feature type="domain" description="Cadherin 3" evidence="3">
    <location>
        <begin position="242"/>
        <end position="353"/>
    </location>
</feature>
<feature type="domain" description="Cadherin 4" evidence="3">
    <location>
        <begin position="368"/>
        <end position="480"/>
    </location>
</feature>
<feature type="domain" description="Cadherin 5" evidence="3">
    <location>
        <begin position="481"/>
        <end position="586"/>
    </location>
</feature>
<feature type="domain" description="Cadherin 6" evidence="3">
    <location>
        <begin position="586"/>
        <end position="695"/>
    </location>
</feature>
<feature type="domain" description="Cadherin 7" evidence="3">
    <location>
        <begin position="695"/>
        <end position="807"/>
    </location>
</feature>
<feature type="domain" description="Cadherin 8" evidence="3">
    <location>
        <begin position="809"/>
        <end position="927"/>
    </location>
</feature>
<feature type="domain" description="Cadherin 9" evidence="3">
    <location>
        <begin position="929"/>
        <end position="1051"/>
    </location>
</feature>
<feature type="region of interest" description="Mediates interaction with USH1C and MYO7B and is required for proper localization to microvilli tips and function in microvilli organization" evidence="1">
    <location>
        <begin position="1178"/>
        <end position="1308"/>
    </location>
</feature>
<feature type="region of interest" description="Disordered" evidence="4">
    <location>
        <begin position="1251"/>
        <end position="1308"/>
    </location>
</feature>
<feature type="compositionally biased region" description="Basic and acidic residues" evidence="4">
    <location>
        <begin position="1255"/>
        <end position="1266"/>
    </location>
</feature>
<feature type="compositionally biased region" description="Polar residues" evidence="4">
    <location>
        <begin position="1288"/>
        <end position="1308"/>
    </location>
</feature>
<feature type="modified residue" description="Phosphoserine" evidence="1">
    <location>
        <position position="1245"/>
    </location>
</feature>
<feature type="modified residue" description="Phosphoserine" evidence="8">
    <location>
        <position position="1297"/>
    </location>
</feature>
<feature type="sequence conflict" description="In Ref. 1; BAE25870." evidence="5" ref="1">
    <original>N</original>
    <variation>D</variation>
    <location>
        <position position="371"/>
    </location>
</feature>
<feature type="sequence conflict" description="In Ref. 3; AAI41302/AAI45625." evidence="5" ref="3">
    <original>Q</original>
    <variation>QS</variation>
    <location>
        <position position="697"/>
    </location>
</feature>
<feature type="sequence conflict" description="In Ref. 3; AAI45625." evidence="5" ref="3">
    <original>W</original>
    <variation>C</variation>
    <location>
        <position position="704"/>
    </location>
</feature>
<feature type="strand" evidence="9">
    <location>
        <begin position="31"/>
        <end position="36"/>
    </location>
</feature>
<feature type="strand" evidence="9">
    <location>
        <begin position="43"/>
        <end position="47"/>
    </location>
</feature>
<feature type="strand" evidence="9">
    <location>
        <begin position="59"/>
        <end position="64"/>
    </location>
</feature>
<feature type="helix" evidence="9">
    <location>
        <begin position="67"/>
        <end position="69"/>
    </location>
</feature>
<feature type="strand" evidence="9">
    <location>
        <begin position="70"/>
        <end position="72"/>
    </location>
</feature>
<feature type="turn" evidence="9">
    <location>
        <begin position="74"/>
        <end position="76"/>
    </location>
</feature>
<feature type="strand" evidence="9">
    <location>
        <begin position="78"/>
        <end position="81"/>
    </location>
</feature>
<feature type="turn" evidence="9">
    <location>
        <begin position="87"/>
        <end position="89"/>
    </location>
</feature>
<feature type="strand" evidence="9">
    <location>
        <begin position="91"/>
        <end position="100"/>
    </location>
</feature>
<feature type="strand" evidence="9">
    <location>
        <begin position="105"/>
        <end position="115"/>
    </location>
</feature>
<feature type="strand" evidence="9">
    <location>
        <begin position="127"/>
        <end position="134"/>
    </location>
</feature>
<feature type="strand" evidence="9">
    <location>
        <begin position="142"/>
        <end position="145"/>
    </location>
</feature>
<feature type="helix" evidence="9">
    <location>
        <begin position="154"/>
        <end position="157"/>
    </location>
</feature>
<feature type="strand" evidence="9">
    <location>
        <begin position="159"/>
        <end position="168"/>
    </location>
</feature>
<feature type="helix" evidence="9">
    <location>
        <begin position="173"/>
        <end position="175"/>
    </location>
</feature>
<feature type="strand" evidence="9">
    <location>
        <begin position="176"/>
        <end position="179"/>
    </location>
</feature>
<feature type="strand" evidence="9">
    <location>
        <begin position="183"/>
        <end position="187"/>
    </location>
</feature>
<feature type="turn" evidence="9">
    <location>
        <begin position="193"/>
        <end position="196"/>
    </location>
</feature>
<feature type="strand" evidence="9">
    <location>
        <begin position="198"/>
        <end position="208"/>
    </location>
</feature>
<feature type="strand" evidence="9">
    <location>
        <begin position="211"/>
        <end position="213"/>
    </location>
</feature>
<feature type="strand" evidence="9">
    <location>
        <begin position="216"/>
        <end position="218"/>
    </location>
</feature>
<feature type="strand" evidence="9">
    <location>
        <begin position="225"/>
        <end position="232"/>
    </location>
</feature>
<feature type="strand" evidence="9">
    <location>
        <begin position="239"/>
        <end position="242"/>
    </location>
</feature>
<feature type="strand" evidence="9">
    <location>
        <begin position="247"/>
        <end position="250"/>
    </location>
</feature>
<feature type="strand" evidence="9">
    <location>
        <begin position="259"/>
        <end position="262"/>
    </location>
</feature>
<feature type="strand" evidence="9">
    <location>
        <begin position="265"/>
        <end position="268"/>
    </location>
</feature>
<feature type="turn" evidence="9">
    <location>
        <begin position="270"/>
        <end position="272"/>
    </location>
</feature>
<feature type="strand" evidence="9">
    <location>
        <begin position="276"/>
        <end position="285"/>
    </location>
</feature>
<feature type="strand" evidence="9">
    <location>
        <begin position="288"/>
        <end position="291"/>
    </location>
</feature>
<feature type="strand" evidence="9">
    <location>
        <begin position="295"/>
        <end position="299"/>
    </location>
</feature>
<feature type="helix" evidence="9">
    <location>
        <begin position="305"/>
        <end position="308"/>
    </location>
</feature>
<feature type="turn" evidence="9">
    <location>
        <begin position="309"/>
        <end position="313"/>
    </location>
</feature>
<feature type="strand" evidence="9">
    <location>
        <begin position="314"/>
        <end position="325"/>
    </location>
</feature>
<feature type="strand" evidence="9">
    <location>
        <begin position="334"/>
        <end position="343"/>
    </location>
</feature>
<feature type="strand" evidence="10">
    <location>
        <begin position="1305"/>
        <end position="1307"/>
    </location>
</feature>
<dbReference type="EMBL" id="AK144400">
    <property type="protein sequence ID" value="BAE25870.1"/>
    <property type="molecule type" value="mRNA"/>
</dbReference>
<dbReference type="EMBL" id="AC162526">
    <property type="status" value="NOT_ANNOTATED_CDS"/>
    <property type="molecule type" value="Genomic_DNA"/>
</dbReference>
<dbReference type="EMBL" id="BC141301">
    <property type="protein sequence ID" value="AAI41302.1"/>
    <property type="molecule type" value="mRNA"/>
</dbReference>
<dbReference type="EMBL" id="BC145624">
    <property type="protein sequence ID" value="AAI45625.1"/>
    <property type="molecule type" value="mRNA"/>
</dbReference>
<dbReference type="CCDS" id="CCDS36669.1"/>
<dbReference type="RefSeq" id="NP_001028536.2">
    <property type="nucleotide sequence ID" value="NM_001033364.3"/>
</dbReference>
<dbReference type="PDB" id="5CYX">
    <property type="method" value="X-ray"/>
    <property type="resolution" value="2.10 A"/>
    <property type="chains" value="A=21-348"/>
</dbReference>
<dbReference type="PDB" id="7X2E">
    <property type="method" value="X-ray"/>
    <property type="resolution" value="1.85 A"/>
    <property type="chains" value="B=1291-1308"/>
</dbReference>
<dbReference type="PDBsum" id="5CYX"/>
<dbReference type="PDBsum" id="7X2E"/>
<dbReference type="SMR" id="E9Q7P9"/>
<dbReference type="FunCoup" id="E9Q7P9">
    <property type="interactions" value="30"/>
</dbReference>
<dbReference type="STRING" id="10090.ENSMUSP00000043596"/>
<dbReference type="iPTMnet" id="E9Q7P9"/>
<dbReference type="PhosphoSitePlus" id="E9Q7P9"/>
<dbReference type="jPOST" id="E9Q7P9"/>
<dbReference type="PaxDb" id="10090-ENSMUSP00000043596"/>
<dbReference type="ProteomicsDB" id="280036"/>
<dbReference type="Antibodypedia" id="2236">
    <property type="antibodies" value="38 antibodies from 10 providers"/>
</dbReference>
<dbReference type="Ensembl" id="ENSMUST00000037145.8">
    <property type="protein sequence ID" value="ENSMUSP00000043596.8"/>
    <property type="gene ID" value="ENSMUSG00000034918.9"/>
</dbReference>
<dbReference type="GeneID" id="268663"/>
<dbReference type="KEGG" id="mmu:268663"/>
<dbReference type="UCSC" id="uc007qoz.2">
    <property type="organism name" value="mouse"/>
</dbReference>
<dbReference type="AGR" id="MGI:2687323"/>
<dbReference type="CTD" id="54825"/>
<dbReference type="MGI" id="MGI:2687323">
    <property type="gene designation" value="Cdhr2"/>
</dbReference>
<dbReference type="VEuPathDB" id="HostDB:ENSMUSG00000034918"/>
<dbReference type="eggNOG" id="KOG3594">
    <property type="taxonomic scope" value="Eukaryota"/>
</dbReference>
<dbReference type="GeneTree" id="ENSGT00940000161160"/>
<dbReference type="HOGENOM" id="CLU_005755_0_0_1"/>
<dbReference type="InParanoid" id="E9Q7P9"/>
<dbReference type="OMA" id="QTVMLVQ"/>
<dbReference type="OrthoDB" id="6491773at2759"/>
<dbReference type="PhylomeDB" id="E9Q7P9"/>
<dbReference type="TreeFam" id="TF332908"/>
<dbReference type="BioGRID-ORCS" id="268663">
    <property type="hits" value="1 hit in 78 CRISPR screens"/>
</dbReference>
<dbReference type="PRO" id="PR:E9Q7P9"/>
<dbReference type="Proteomes" id="UP000000589">
    <property type="component" value="Chromosome 13"/>
</dbReference>
<dbReference type="RNAct" id="E9Q7P9">
    <property type="molecule type" value="protein"/>
</dbReference>
<dbReference type="Bgee" id="ENSMUSG00000034918">
    <property type="expression patterns" value="Expressed in small intestine Peyer's patch and 43 other cell types or tissues"/>
</dbReference>
<dbReference type="GO" id="GO:0070161">
    <property type="term" value="C:anchoring junction"/>
    <property type="evidence" value="ECO:0007669"/>
    <property type="project" value="UniProtKB-SubCell"/>
</dbReference>
<dbReference type="GO" id="GO:0016324">
    <property type="term" value="C:apical plasma membrane"/>
    <property type="evidence" value="ECO:0000250"/>
    <property type="project" value="UniProtKB"/>
</dbReference>
<dbReference type="GO" id="GO:0031526">
    <property type="term" value="C:brush border membrane"/>
    <property type="evidence" value="ECO:0000250"/>
    <property type="project" value="UniProtKB"/>
</dbReference>
<dbReference type="GO" id="GO:0031528">
    <property type="term" value="C:microvillus membrane"/>
    <property type="evidence" value="ECO:0000250"/>
    <property type="project" value="UniProtKB"/>
</dbReference>
<dbReference type="GO" id="GO:0005886">
    <property type="term" value="C:plasma membrane"/>
    <property type="evidence" value="ECO:0000250"/>
    <property type="project" value="UniProtKB"/>
</dbReference>
<dbReference type="GO" id="GO:0005509">
    <property type="term" value="F:calcium ion binding"/>
    <property type="evidence" value="ECO:0007669"/>
    <property type="project" value="InterPro"/>
</dbReference>
<dbReference type="GO" id="GO:0050839">
    <property type="term" value="F:cell adhesion molecule binding"/>
    <property type="evidence" value="ECO:0000250"/>
    <property type="project" value="UniProtKB"/>
</dbReference>
<dbReference type="GO" id="GO:0044331">
    <property type="term" value="P:cell-cell adhesion mediated by cadherin"/>
    <property type="evidence" value="ECO:0000250"/>
    <property type="project" value="UniProtKB"/>
</dbReference>
<dbReference type="GO" id="GO:0030855">
    <property type="term" value="P:epithelial cell differentiation"/>
    <property type="evidence" value="ECO:0000250"/>
    <property type="project" value="UniProtKB"/>
</dbReference>
<dbReference type="GO" id="GO:0007156">
    <property type="term" value="P:homophilic cell adhesion via plasma membrane adhesion molecules"/>
    <property type="evidence" value="ECO:0007669"/>
    <property type="project" value="InterPro"/>
</dbReference>
<dbReference type="GO" id="GO:0090675">
    <property type="term" value="P:intermicrovillar adhesion"/>
    <property type="evidence" value="ECO:0000250"/>
    <property type="project" value="UniProtKB"/>
</dbReference>
<dbReference type="GO" id="GO:0060243">
    <property type="term" value="P:negative regulation of cell growth involved in contact inhibition"/>
    <property type="evidence" value="ECO:0000250"/>
    <property type="project" value="UniProtKB"/>
</dbReference>
<dbReference type="GO" id="GO:0032532">
    <property type="term" value="P:regulation of microvillus length"/>
    <property type="evidence" value="ECO:0000250"/>
    <property type="project" value="UniProtKB"/>
</dbReference>
<dbReference type="CDD" id="cd11304">
    <property type="entry name" value="Cadherin_repeat"/>
    <property type="match status" value="9"/>
</dbReference>
<dbReference type="FunFam" id="2.60.40.60:FF:000221">
    <property type="entry name" value="Cadherin related family member 2"/>
    <property type="match status" value="1"/>
</dbReference>
<dbReference type="FunFam" id="2.60.40.60:FF:000245">
    <property type="entry name" value="Cadherin related family member 2"/>
    <property type="match status" value="1"/>
</dbReference>
<dbReference type="FunFam" id="2.60.40.60:FF:000252">
    <property type="entry name" value="Cadherin related family member 2"/>
    <property type="match status" value="1"/>
</dbReference>
<dbReference type="FunFam" id="2.60.40.60:FF:000098">
    <property type="entry name" value="cadherin-23 isoform X1"/>
    <property type="match status" value="1"/>
</dbReference>
<dbReference type="FunFam" id="2.60.40.60:FF:000168">
    <property type="entry name" value="Cadherin-related family member 2"/>
    <property type="match status" value="1"/>
</dbReference>
<dbReference type="FunFam" id="2.60.40.60:FF:000264">
    <property type="entry name" value="Cadherin-related family member 2"/>
    <property type="match status" value="1"/>
</dbReference>
<dbReference type="FunFam" id="2.60.40.60:FF:000101">
    <property type="entry name" value="FAT atypical cadherin 4"/>
    <property type="match status" value="1"/>
</dbReference>
<dbReference type="FunFam" id="2.60.40.60:FF:000094">
    <property type="entry name" value="protocadherin gamma-C4 isoform X2"/>
    <property type="match status" value="2"/>
</dbReference>
<dbReference type="Gene3D" id="2.60.40.60">
    <property type="entry name" value="Cadherins"/>
    <property type="match status" value="9"/>
</dbReference>
<dbReference type="InterPro" id="IPR002126">
    <property type="entry name" value="Cadherin-like_dom"/>
</dbReference>
<dbReference type="InterPro" id="IPR015919">
    <property type="entry name" value="Cadherin-like_sf"/>
</dbReference>
<dbReference type="InterPro" id="IPR020894">
    <property type="entry name" value="Cadherin_CS"/>
</dbReference>
<dbReference type="PANTHER" id="PTHR24026:SF133">
    <property type="entry name" value="CADHERIN-RELATED FAMILY MEMBER 2"/>
    <property type="match status" value="1"/>
</dbReference>
<dbReference type="PANTHER" id="PTHR24026">
    <property type="entry name" value="FAT ATYPICAL CADHERIN-RELATED"/>
    <property type="match status" value="1"/>
</dbReference>
<dbReference type="Pfam" id="PF00028">
    <property type="entry name" value="Cadherin"/>
    <property type="match status" value="7"/>
</dbReference>
<dbReference type="PRINTS" id="PR00205">
    <property type="entry name" value="CADHERIN"/>
</dbReference>
<dbReference type="SMART" id="SM00112">
    <property type="entry name" value="CA"/>
    <property type="match status" value="9"/>
</dbReference>
<dbReference type="SUPFAM" id="SSF49313">
    <property type="entry name" value="Cadherin-like"/>
    <property type="match status" value="9"/>
</dbReference>
<dbReference type="PROSITE" id="PS00232">
    <property type="entry name" value="CADHERIN_1"/>
    <property type="match status" value="5"/>
</dbReference>
<dbReference type="PROSITE" id="PS50268">
    <property type="entry name" value="CADHERIN_2"/>
    <property type="match status" value="9"/>
</dbReference>
<protein>
    <recommendedName>
        <fullName evidence="5">Cadherin-related family member 2</fullName>
    </recommendedName>
</protein>
<keyword id="KW-0002">3D-structure</keyword>
<keyword id="KW-0106">Calcium</keyword>
<keyword id="KW-0130">Cell adhesion</keyword>
<keyword id="KW-0965">Cell junction</keyword>
<keyword id="KW-1003">Cell membrane</keyword>
<keyword id="KW-0966">Cell projection</keyword>
<keyword id="KW-0221">Differentiation</keyword>
<keyword id="KW-0472">Membrane</keyword>
<keyword id="KW-0597">Phosphoprotein</keyword>
<keyword id="KW-1185">Reference proteome</keyword>
<keyword id="KW-0677">Repeat</keyword>
<keyword id="KW-0732">Signal</keyword>
<keyword id="KW-0812">Transmembrane</keyword>
<keyword id="KW-1133">Transmembrane helix</keyword>
<organism>
    <name type="scientific">Mus musculus</name>
    <name type="common">Mouse</name>
    <dbReference type="NCBI Taxonomy" id="10090"/>
    <lineage>
        <taxon>Eukaryota</taxon>
        <taxon>Metazoa</taxon>
        <taxon>Chordata</taxon>
        <taxon>Craniata</taxon>
        <taxon>Vertebrata</taxon>
        <taxon>Euteleostomi</taxon>
        <taxon>Mammalia</taxon>
        <taxon>Eutheria</taxon>
        <taxon>Euarchontoglires</taxon>
        <taxon>Glires</taxon>
        <taxon>Rodentia</taxon>
        <taxon>Myomorpha</taxon>
        <taxon>Muroidea</taxon>
        <taxon>Muridae</taxon>
        <taxon>Murinae</taxon>
        <taxon>Mus</taxon>
        <taxon>Mus</taxon>
    </lineage>
</organism>
<reference key="1">
    <citation type="journal article" date="2005" name="Science">
        <title>The transcriptional landscape of the mammalian genome.</title>
        <authorList>
            <person name="Carninci P."/>
            <person name="Kasukawa T."/>
            <person name="Katayama S."/>
            <person name="Gough J."/>
            <person name="Frith M.C."/>
            <person name="Maeda N."/>
            <person name="Oyama R."/>
            <person name="Ravasi T."/>
            <person name="Lenhard B."/>
            <person name="Wells C."/>
            <person name="Kodzius R."/>
            <person name="Shimokawa K."/>
            <person name="Bajic V.B."/>
            <person name="Brenner S.E."/>
            <person name="Batalov S."/>
            <person name="Forrest A.R."/>
            <person name="Zavolan M."/>
            <person name="Davis M.J."/>
            <person name="Wilming L.G."/>
            <person name="Aidinis V."/>
            <person name="Allen J.E."/>
            <person name="Ambesi-Impiombato A."/>
            <person name="Apweiler R."/>
            <person name="Aturaliya R.N."/>
            <person name="Bailey T.L."/>
            <person name="Bansal M."/>
            <person name="Baxter L."/>
            <person name="Beisel K.W."/>
            <person name="Bersano T."/>
            <person name="Bono H."/>
            <person name="Chalk A.M."/>
            <person name="Chiu K.P."/>
            <person name="Choudhary V."/>
            <person name="Christoffels A."/>
            <person name="Clutterbuck D.R."/>
            <person name="Crowe M.L."/>
            <person name="Dalla E."/>
            <person name="Dalrymple B.P."/>
            <person name="de Bono B."/>
            <person name="Della Gatta G."/>
            <person name="di Bernardo D."/>
            <person name="Down T."/>
            <person name="Engstrom P."/>
            <person name="Fagiolini M."/>
            <person name="Faulkner G."/>
            <person name="Fletcher C.F."/>
            <person name="Fukushima T."/>
            <person name="Furuno M."/>
            <person name="Futaki S."/>
            <person name="Gariboldi M."/>
            <person name="Georgii-Hemming P."/>
            <person name="Gingeras T.R."/>
            <person name="Gojobori T."/>
            <person name="Green R.E."/>
            <person name="Gustincich S."/>
            <person name="Harbers M."/>
            <person name="Hayashi Y."/>
            <person name="Hensch T.K."/>
            <person name="Hirokawa N."/>
            <person name="Hill D."/>
            <person name="Huminiecki L."/>
            <person name="Iacono M."/>
            <person name="Ikeo K."/>
            <person name="Iwama A."/>
            <person name="Ishikawa T."/>
            <person name="Jakt M."/>
            <person name="Kanapin A."/>
            <person name="Katoh M."/>
            <person name="Kawasawa Y."/>
            <person name="Kelso J."/>
            <person name="Kitamura H."/>
            <person name="Kitano H."/>
            <person name="Kollias G."/>
            <person name="Krishnan S.P."/>
            <person name="Kruger A."/>
            <person name="Kummerfeld S.K."/>
            <person name="Kurochkin I.V."/>
            <person name="Lareau L.F."/>
            <person name="Lazarevic D."/>
            <person name="Lipovich L."/>
            <person name="Liu J."/>
            <person name="Liuni S."/>
            <person name="McWilliam S."/>
            <person name="Madan Babu M."/>
            <person name="Madera M."/>
            <person name="Marchionni L."/>
            <person name="Matsuda H."/>
            <person name="Matsuzawa S."/>
            <person name="Miki H."/>
            <person name="Mignone F."/>
            <person name="Miyake S."/>
            <person name="Morris K."/>
            <person name="Mottagui-Tabar S."/>
            <person name="Mulder N."/>
            <person name="Nakano N."/>
            <person name="Nakauchi H."/>
            <person name="Ng P."/>
            <person name="Nilsson R."/>
            <person name="Nishiguchi S."/>
            <person name="Nishikawa S."/>
            <person name="Nori F."/>
            <person name="Ohara O."/>
            <person name="Okazaki Y."/>
            <person name="Orlando V."/>
            <person name="Pang K.C."/>
            <person name="Pavan W.J."/>
            <person name="Pavesi G."/>
            <person name="Pesole G."/>
            <person name="Petrovsky N."/>
            <person name="Piazza S."/>
            <person name="Reed J."/>
            <person name="Reid J.F."/>
            <person name="Ring B.Z."/>
            <person name="Ringwald M."/>
            <person name="Rost B."/>
            <person name="Ruan Y."/>
            <person name="Salzberg S.L."/>
            <person name="Sandelin A."/>
            <person name="Schneider C."/>
            <person name="Schoenbach C."/>
            <person name="Sekiguchi K."/>
            <person name="Semple C.A."/>
            <person name="Seno S."/>
            <person name="Sessa L."/>
            <person name="Sheng Y."/>
            <person name="Shibata Y."/>
            <person name="Shimada H."/>
            <person name="Shimada K."/>
            <person name="Silva D."/>
            <person name="Sinclair B."/>
            <person name="Sperling S."/>
            <person name="Stupka E."/>
            <person name="Sugiura K."/>
            <person name="Sultana R."/>
            <person name="Takenaka Y."/>
            <person name="Taki K."/>
            <person name="Tammoja K."/>
            <person name="Tan S.L."/>
            <person name="Tang S."/>
            <person name="Taylor M.S."/>
            <person name="Tegner J."/>
            <person name="Teichmann S.A."/>
            <person name="Ueda H.R."/>
            <person name="van Nimwegen E."/>
            <person name="Verardo R."/>
            <person name="Wei C.L."/>
            <person name="Yagi K."/>
            <person name="Yamanishi H."/>
            <person name="Zabarovsky E."/>
            <person name="Zhu S."/>
            <person name="Zimmer A."/>
            <person name="Hide W."/>
            <person name="Bult C."/>
            <person name="Grimmond S.M."/>
            <person name="Teasdale R.D."/>
            <person name="Liu E.T."/>
            <person name="Brusic V."/>
            <person name="Quackenbush J."/>
            <person name="Wahlestedt C."/>
            <person name="Mattick J.S."/>
            <person name="Hume D.A."/>
            <person name="Kai C."/>
            <person name="Sasaki D."/>
            <person name="Tomaru Y."/>
            <person name="Fukuda S."/>
            <person name="Kanamori-Katayama M."/>
            <person name="Suzuki M."/>
            <person name="Aoki J."/>
            <person name="Arakawa T."/>
            <person name="Iida J."/>
            <person name="Imamura K."/>
            <person name="Itoh M."/>
            <person name="Kato T."/>
            <person name="Kawaji H."/>
            <person name="Kawagashira N."/>
            <person name="Kawashima T."/>
            <person name="Kojima M."/>
            <person name="Kondo S."/>
            <person name="Konno H."/>
            <person name="Nakano K."/>
            <person name="Ninomiya N."/>
            <person name="Nishio T."/>
            <person name="Okada M."/>
            <person name="Plessy C."/>
            <person name="Shibata K."/>
            <person name="Shiraki T."/>
            <person name="Suzuki S."/>
            <person name="Tagami M."/>
            <person name="Waki K."/>
            <person name="Watahiki A."/>
            <person name="Okamura-Oho Y."/>
            <person name="Suzuki H."/>
            <person name="Kawai J."/>
            <person name="Hayashizaki Y."/>
        </authorList>
    </citation>
    <scope>NUCLEOTIDE SEQUENCE [LARGE SCALE MRNA]</scope>
    <source>
        <strain>C57BL/6J</strain>
        <tissue>Intestinal mucosa</tissue>
    </source>
</reference>
<reference key="2">
    <citation type="journal article" date="2009" name="PLoS Biol.">
        <title>Lineage-specific biology revealed by a finished genome assembly of the mouse.</title>
        <authorList>
            <person name="Church D.M."/>
            <person name="Goodstadt L."/>
            <person name="Hillier L.W."/>
            <person name="Zody M.C."/>
            <person name="Goldstein S."/>
            <person name="She X."/>
            <person name="Bult C.J."/>
            <person name="Agarwala R."/>
            <person name="Cherry J.L."/>
            <person name="DiCuccio M."/>
            <person name="Hlavina W."/>
            <person name="Kapustin Y."/>
            <person name="Meric P."/>
            <person name="Maglott D."/>
            <person name="Birtle Z."/>
            <person name="Marques A.C."/>
            <person name="Graves T."/>
            <person name="Zhou S."/>
            <person name="Teague B."/>
            <person name="Potamousis K."/>
            <person name="Churas C."/>
            <person name="Place M."/>
            <person name="Herschleb J."/>
            <person name="Runnheim R."/>
            <person name="Forrest D."/>
            <person name="Amos-Landgraf J."/>
            <person name="Schwartz D.C."/>
            <person name="Cheng Z."/>
            <person name="Lindblad-Toh K."/>
            <person name="Eichler E.E."/>
            <person name="Ponting C.P."/>
        </authorList>
    </citation>
    <scope>NUCLEOTIDE SEQUENCE [LARGE SCALE GENOMIC DNA]</scope>
    <source>
        <strain>C57BL/6J</strain>
    </source>
</reference>
<reference key="3">
    <citation type="journal article" date="2004" name="Genome Res.">
        <title>The status, quality, and expansion of the NIH full-length cDNA project: the Mammalian Gene Collection (MGC).</title>
        <authorList>
            <consortium name="The MGC Project Team"/>
        </authorList>
    </citation>
    <scope>NUCLEOTIDE SEQUENCE [LARGE SCALE MRNA]</scope>
    <source>
        <tissue>Brain</tissue>
    </source>
</reference>
<reference key="4">
    <citation type="journal article" date="2010" name="Cell">
        <title>A tissue-specific atlas of mouse protein phosphorylation and expression.</title>
        <authorList>
            <person name="Huttlin E.L."/>
            <person name="Jedrychowski M.P."/>
            <person name="Elias J.E."/>
            <person name="Goswami T."/>
            <person name="Rad R."/>
            <person name="Beausoleil S.A."/>
            <person name="Villen J."/>
            <person name="Haas W."/>
            <person name="Sowa M.E."/>
            <person name="Gygi S.P."/>
        </authorList>
    </citation>
    <scope>PHOSPHORYLATION [LARGE SCALE ANALYSIS] AT SER-1297</scope>
    <scope>IDENTIFICATION BY MASS SPECTROMETRY [LARGE SCALE ANALYSIS]</scope>
    <source>
        <tissue>Kidney</tissue>
    </source>
</reference>
<reference key="5">
    <citation type="journal article" date="2016" name="Dev. Cell">
        <title>Mechanistic basis of organization of the Harmonin/USH1C-mediated brush border microvilli tip-link complex.</title>
        <authorList>
            <person name="Li J."/>
            <person name="He Y."/>
            <person name="Lu Q."/>
            <person name="Zhang M."/>
        </authorList>
    </citation>
    <scope>INTERACTION WITH USH1C</scope>
</reference>
<comment type="function">
    <text evidence="1">Intermicrovillar adhesion molecule that forms, via its extracellular domain, calcium-dependent heterophilic complexes with CDHR5 on adjacent microvilli. Thereby, controls the packing of microvilli at the apical membrane of epithelial cells. Through its cytoplasmic domain, interacts with microvillus cytoplasmic proteins to form the intermicrovillar adhesion complex/IMAC. This complex plays a central role in microvilli and epithelial brush border differentiation. May also play a role in cell-cell adhesion and contact inhibition in epithelial cells.</text>
</comment>
<comment type="subunit">
    <text evidence="1 6">Part of the IMAC/intermicrovillar adhesion complex/intermicrovillar tip-link complex composed of ANKS4B, MYO7B, USH1C, CDHR2 and CDHR5. Interacts with MAST2 (By similarity). Interacts (via cytoplasmic domain) with USH1C and MYO7B; required for proper localization of CDHR2 to microvilli tips and its function in brush border differentiation (Probable).</text>
</comment>
<comment type="subcellular location">
    <subcellularLocation>
        <location evidence="1">Apical cell membrane</location>
        <topology evidence="1">Single-pass type I membrane protein</topology>
    </subcellularLocation>
    <subcellularLocation>
        <location evidence="1">Cell projection</location>
        <location evidence="1">Microvillus membrane</location>
        <topology evidence="1">Single-pass type I membrane protein</topology>
    </subcellularLocation>
    <subcellularLocation>
        <location evidence="1">Cell junction</location>
    </subcellularLocation>
</comment>
<comment type="domain">
    <text evidence="1">The cadherin 1 domain is required for binding to CDHR5.</text>
</comment>
<sequence>MAWLWLLCALLPAFMVSVTANSPPSFGVNMTLVTLPEDLPVGAVAFWLVATDSDNDHLTYGISGPNASYFSVNANTGEVKLASPLDFETVPFFKITISTSDGLNIRTAEMQVIVEDRNDNIPVFLNTEFSTSINETLPVGSVVFSVLAEDKDTGTAGLVQYFIEKVIPSTANSNNLFRILENGSIVLNDTLSYNNKSAFYQLELKACDSGGILDNKPKTQCSQPVFVSISVIDEPDLDPRFIREFYSASVAEDATLGTSVLTVEAVDSDKGINDIVTYSVSNSTRPGWFDIREDGVIFVNGSLDREQLLLENEEVQIQVTATEKNLNIYGQEAKASMWVTIRVTDVNDHKPEFYNCSLPGCSFSPQEAQVNFIGYVDEHASARISIDGLTMVAYDPDQGDNGTFLLSLNGQDAEAFNVSPERAAGSVSVQVVVRNSEMVDYEKETVMVVEVVATDSVSNNYSVATVTIHLRNINDHRPVFSQSLYELTVPEHCPTGYLVTDKIQATDLDGDEWGPITYSLLPGNGADLFEVEPNSGNLTVKNGTLLDREKQAVYYLTLQATDGGNQSTTTALEITLLDINDNPPVVRGSYNVFVPEENGNVSVTIQAYDDDQPDTNNSLLVFSLLPGPYSSNFSLDPNTGLLRNLGPLDREAIDPALEGRIVLTVIVADCGEPSLSTNVNVTITVEDINDNLPVFNQSYEFSVWERVPGAWVGTVKAWDADQTAANNRISFSLSGTGANNFILQGNVLEQGWAEGSLWLLPDVRLDYETQKFFHLTVSAENPGPQGLDSTANVTVTVMDVNDEPPTLDAASLQAISVTENGSEHGQVTRVIAQDVDTAALLRIELVDVICTKAGVDVGSVCHGWFSVDGNGSVYINQSEAIDYEACHLVTLVVRAYDLNTDPGFDAYSSNGSLLINIKDKNDNAPYFLPNNQTFVIIPELVLPNQQVASVQARDEDSEDNGIIMFSILKAEFVRKDGTSNPVQVFRITRSVEAGLFTGSIELVTNLDSTIQGTYQVTVQAQDQPTLGPALETQTTLNLFTVDQSYRVRLQFSTSKEDVGANMEEIKEALIQATRTSVYVVTIQNIDSTARARASSYMDAYFVFSNGTALTLTELNMMIRKDQDALRQLLQLGLVVVSSQESQEPDQQKLLTSVIIGLVVSLVLVLVILITALVCLRKSYHRKLRAMKAGKEARKTPIETTAPTAAIPGTNMYNTDRANPVLDLPTKDLGLECHSSSDLDYDSLNSLDENSVDLDMDSKEFKRKDLPGDPPEPDPEPLTAVLSGRSAGASEQQKKNLSFTNPGLDTTDL</sequence>
<gene>
    <name evidence="7" type="primary">Cdhr2</name>
</gene>
<accession>E9Q7P9</accession>
<accession>B7ZP46</accession>
<accession>B9EJ32</accession>
<accession>Q3UN77</accession>
<proteinExistence type="evidence at protein level"/>
<evidence type="ECO:0000250" key="1">
    <source>
        <dbReference type="UniProtKB" id="Q9BYE9"/>
    </source>
</evidence>
<evidence type="ECO:0000255" key="2"/>
<evidence type="ECO:0000255" key="3">
    <source>
        <dbReference type="PROSITE-ProRule" id="PRU00043"/>
    </source>
</evidence>
<evidence type="ECO:0000256" key="4">
    <source>
        <dbReference type="SAM" id="MobiDB-lite"/>
    </source>
</evidence>
<evidence type="ECO:0000305" key="5"/>
<evidence type="ECO:0000305" key="6">
    <source>
    </source>
</evidence>
<evidence type="ECO:0000312" key="7">
    <source>
        <dbReference type="MGI" id="MGI:2687323"/>
    </source>
</evidence>
<evidence type="ECO:0007744" key="8">
    <source>
    </source>
</evidence>
<evidence type="ECO:0007829" key="9">
    <source>
        <dbReference type="PDB" id="5CYX"/>
    </source>
</evidence>
<evidence type="ECO:0007829" key="10">
    <source>
        <dbReference type="PDB" id="7X2E"/>
    </source>
</evidence>